<name>YH006_HUMAN</name>
<protein>
    <recommendedName>
        <fullName>Putative chemokine-related protein FP248</fullName>
    </recommendedName>
    <alternativeName>
        <fullName>Protein N73</fullName>
    </alternativeName>
</protein>
<evidence type="ECO:0000255" key="1"/>
<evidence type="ECO:0000305" key="2"/>
<evidence type="ECO:0000305" key="3">
    <source>
    </source>
</evidence>
<keyword id="KW-0325">Glycoprotein</keyword>
<keyword id="KW-1185">Reference proteome</keyword>
<keyword id="KW-0964">Secreted</keyword>
<keyword id="KW-0732">Signal</keyword>
<comment type="subcellular location">
    <subcellularLocation>
        <location evidence="2">Secreted</location>
    </subcellularLocation>
</comment>
<comment type="caution">
    <text evidence="3">Product of a dubious gene prediction. Identified as a novel protein related to chemokines on the basis of a 3D profile-based proteome-wide analysis (PubMed:22586462).</text>
</comment>
<sequence length="208" mass="21376">MGTGGSLLCGCSLVLSCLCPSASLPDPGNSTWPPGAQAGLPAALALPLPRLPRILFPMAGRPARPSSDFVGCAQGMCCHGRQGTVHIHTSSVSCWTPCPVTGTGGTAVSRKDRVLPHRRQVSLACVCAVGERAGQLWSQKPVQMARPSARHLLPRGSSPNSQAVLLPSVCPVPWPPVGPSPGQGEGLSPAFPGVGTDRGDSWALVLQV</sequence>
<gene>
    <name type="ORF">FP248</name>
</gene>
<organism>
    <name type="scientific">Homo sapiens</name>
    <name type="common">Human</name>
    <dbReference type="NCBI Taxonomy" id="9606"/>
    <lineage>
        <taxon>Eukaryota</taxon>
        <taxon>Metazoa</taxon>
        <taxon>Chordata</taxon>
        <taxon>Craniata</taxon>
        <taxon>Vertebrata</taxon>
        <taxon>Euteleostomi</taxon>
        <taxon>Mammalia</taxon>
        <taxon>Eutheria</taxon>
        <taxon>Euarchontoglires</taxon>
        <taxon>Primates</taxon>
        <taxon>Haplorrhini</taxon>
        <taxon>Catarrhini</taxon>
        <taxon>Hominidae</taxon>
        <taxon>Homo</taxon>
    </lineage>
</organism>
<reference key="1">
    <citation type="journal article" date="2004" name="Proc. Natl. Acad. Sci. U.S.A.">
        <title>Large-scale cDNA transfection screening for genes related to cancer development and progression.</title>
        <authorList>
            <person name="Wan D."/>
            <person name="Gong Y."/>
            <person name="Qin W."/>
            <person name="Zhang P."/>
            <person name="Li J."/>
            <person name="Wei L."/>
            <person name="Zhou X."/>
            <person name="Li H."/>
            <person name="Qiu X."/>
            <person name="Zhong F."/>
            <person name="He L."/>
            <person name="Yu J."/>
            <person name="Yao G."/>
            <person name="Jiang H."/>
            <person name="Qian L."/>
            <person name="Yu Y."/>
            <person name="Shu H."/>
            <person name="Chen X."/>
            <person name="Xu H."/>
            <person name="Guo M."/>
            <person name="Pan Z."/>
            <person name="Chen Y."/>
            <person name="Ge C."/>
            <person name="Yang S."/>
            <person name="Gu J."/>
        </authorList>
    </citation>
    <scope>NUCLEOTIDE SEQUENCE [LARGE SCALE MRNA]</scope>
</reference>
<reference key="2">
    <citation type="journal article" date="2006" name="Nature">
        <title>DNA sequence and analysis of human chromosome 8.</title>
        <authorList>
            <person name="Nusbaum C."/>
            <person name="Mikkelsen T.S."/>
            <person name="Zody M.C."/>
            <person name="Asakawa S."/>
            <person name="Taudien S."/>
            <person name="Garber M."/>
            <person name="Kodira C.D."/>
            <person name="Schueler M.G."/>
            <person name="Shimizu A."/>
            <person name="Whittaker C.A."/>
            <person name="Chang J.L."/>
            <person name="Cuomo C.A."/>
            <person name="Dewar K."/>
            <person name="FitzGerald M.G."/>
            <person name="Yang X."/>
            <person name="Allen N.R."/>
            <person name="Anderson S."/>
            <person name="Asakawa T."/>
            <person name="Blechschmidt K."/>
            <person name="Bloom T."/>
            <person name="Borowsky M.L."/>
            <person name="Butler J."/>
            <person name="Cook A."/>
            <person name="Corum B."/>
            <person name="DeArellano K."/>
            <person name="DeCaprio D."/>
            <person name="Dooley K.T."/>
            <person name="Dorris L. III"/>
            <person name="Engels R."/>
            <person name="Gloeckner G."/>
            <person name="Hafez N."/>
            <person name="Hagopian D.S."/>
            <person name="Hall J.L."/>
            <person name="Ishikawa S.K."/>
            <person name="Jaffe D.B."/>
            <person name="Kamat A."/>
            <person name="Kudoh J."/>
            <person name="Lehmann R."/>
            <person name="Lokitsang T."/>
            <person name="Macdonald P."/>
            <person name="Major J.E."/>
            <person name="Matthews C.D."/>
            <person name="Mauceli E."/>
            <person name="Menzel U."/>
            <person name="Mihalev A.H."/>
            <person name="Minoshima S."/>
            <person name="Murayama Y."/>
            <person name="Naylor J.W."/>
            <person name="Nicol R."/>
            <person name="Nguyen C."/>
            <person name="O'Leary S.B."/>
            <person name="O'Neill K."/>
            <person name="Parker S.C.J."/>
            <person name="Polley A."/>
            <person name="Raymond C.K."/>
            <person name="Reichwald K."/>
            <person name="Rodriguez J."/>
            <person name="Sasaki T."/>
            <person name="Schilhabel M."/>
            <person name="Siddiqui R."/>
            <person name="Smith C.L."/>
            <person name="Sneddon T.P."/>
            <person name="Talamas J.A."/>
            <person name="Tenzin P."/>
            <person name="Topham K."/>
            <person name="Venkataraman V."/>
            <person name="Wen G."/>
            <person name="Yamazaki S."/>
            <person name="Young S.K."/>
            <person name="Zeng Q."/>
            <person name="Zimmer A.R."/>
            <person name="Rosenthal A."/>
            <person name="Birren B.W."/>
            <person name="Platzer M."/>
            <person name="Shimizu N."/>
            <person name="Lander E.S."/>
        </authorList>
    </citation>
    <scope>NUCLEOTIDE SEQUENCE [LARGE SCALE GENOMIC DNA]</scope>
</reference>
<reference key="3">
    <citation type="journal article" date="2012" name="PLoS ONE">
        <title>3D profile-based approach to proteome-wide discovery of novel human chemokines.</title>
        <authorList>
            <person name="Tomczak A."/>
            <person name="Sontheimer J."/>
            <person name="Drechsel D."/>
            <person name="Hausdorf R."/>
            <person name="Gentzel M."/>
            <person name="Shevchenko A."/>
            <person name="Eichler S."/>
            <person name="Fahmy K."/>
            <person name="Buchholz F."/>
            <person name="Pisabarro M.T."/>
        </authorList>
    </citation>
    <scope>IDENTIFICATION</scope>
</reference>
<proteinExistence type="uncertain"/>
<feature type="signal peptide" evidence="1">
    <location>
        <begin position="1"/>
        <end position="23"/>
    </location>
</feature>
<feature type="chain" id="PRO_0000332262" description="Putative chemokine-related protein FP248">
    <location>
        <begin position="24"/>
        <end position="208"/>
    </location>
</feature>
<feature type="glycosylation site" description="N-linked (GlcNAc...) asparagine" evidence="1">
    <location>
        <position position="29"/>
    </location>
</feature>
<accession>Q71RG6</accession>
<dbReference type="EMBL" id="AF370371">
    <property type="protein sequence ID" value="AAQ15207.1"/>
    <property type="molecule type" value="mRNA"/>
</dbReference>
<dbReference type="EMBL" id="AC100803">
    <property type="status" value="NOT_ANNOTATED_CDS"/>
    <property type="molecule type" value="Genomic_DNA"/>
</dbReference>
<dbReference type="GlyGen" id="Q71RG6">
    <property type="glycosylation" value="2 sites"/>
</dbReference>
<dbReference type="BioMuta" id="FP248"/>
<dbReference type="neXtProt" id="NX_Q71RG6"/>
<dbReference type="InParanoid" id="Q71RG6"/>
<dbReference type="PAN-GO" id="Q71RG6">
    <property type="GO annotations" value="0 GO annotations based on evolutionary models"/>
</dbReference>
<dbReference type="Pharos" id="Q71RG6">
    <property type="development level" value="Tdark"/>
</dbReference>
<dbReference type="Proteomes" id="UP000005640">
    <property type="component" value="Unplaced"/>
</dbReference>
<dbReference type="RNAct" id="Q71RG6">
    <property type="molecule type" value="protein"/>
</dbReference>
<dbReference type="GO" id="GO:0005576">
    <property type="term" value="C:extracellular region"/>
    <property type="evidence" value="ECO:0007669"/>
    <property type="project" value="UniProtKB-SubCell"/>
</dbReference>